<evidence type="ECO:0000250" key="1"/>
<evidence type="ECO:0000305" key="2"/>
<feature type="chain" id="PRO_0000140842" description="Phospho-2-dehydro-3-deoxyheptonate aldolase, Trp-sensitive">
    <location>
        <begin position="1"/>
        <end position="348"/>
    </location>
</feature>
<name>AROH_ECO57</name>
<gene>
    <name type="primary">aroH</name>
    <name type="ordered locus">Z2733</name>
    <name type="ordered locus">ECs2411</name>
</gene>
<proteinExistence type="inferred from homology"/>
<comment type="function">
    <text evidence="1">Stereospecific condensation of phosphoenolpyruvate (PEP) and D-erythrose-4-phosphate (E4P) giving rise to 3-deoxy-D-arabino-heptulosonate-7-phosphate (DAHP).</text>
</comment>
<comment type="catalytic activity">
    <reaction>
        <text>D-erythrose 4-phosphate + phosphoenolpyruvate + H2O = 7-phospho-2-dehydro-3-deoxy-D-arabino-heptonate + phosphate</text>
        <dbReference type="Rhea" id="RHEA:14717"/>
        <dbReference type="ChEBI" id="CHEBI:15377"/>
        <dbReference type="ChEBI" id="CHEBI:16897"/>
        <dbReference type="ChEBI" id="CHEBI:43474"/>
        <dbReference type="ChEBI" id="CHEBI:58394"/>
        <dbReference type="ChEBI" id="CHEBI:58702"/>
        <dbReference type="EC" id="2.5.1.54"/>
    </reaction>
</comment>
<comment type="pathway">
    <text>Metabolic intermediate biosynthesis; chorismate biosynthesis; chorismate from D-erythrose 4-phosphate and phosphoenolpyruvate: step 1/7.</text>
</comment>
<comment type="similarity">
    <text evidence="2">Belongs to the class-I DAHP synthase family.</text>
</comment>
<accession>Q8X5W4</accession>
<reference key="1">
    <citation type="journal article" date="2001" name="Nature">
        <title>Genome sequence of enterohaemorrhagic Escherichia coli O157:H7.</title>
        <authorList>
            <person name="Perna N.T."/>
            <person name="Plunkett G. III"/>
            <person name="Burland V."/>
            <person name="Mau B."/>
            <person name="Glasner J.D."/>
            <person name="Rose D.J."/>
            <person name="Mayhew G.F."/>
            <person name="Evans P.S."/>
            <person name="Gregor J."/>
            <person name="Kirkpatrick H.A."/>
            <person name="Posfai G."/>
            <person name="Hackett J."/>
            <person name="Klink S."/>
            <person name="Boutin A."/>
            <person name="Shao Y."/>
            <person name="Miller L."/>
            <person name="Grotbeck E.J."/>
            <person name="Davis N.W."/>
            <person name="Lim A."/>
            <person name="Dimalanta E.T."/>
            <person name="Potamousis K."/>
            <person name="Apodaca J."/>
            <person name="Anantharaman T.S."/>
            <person name="Lin J."/>
            <person name="Yen G."/>
            <person name="Schwartz D.C."/>
            <person name="Welch R.A."/>
            <person name="Blattner F.R."/>
        </authorList>
    </citation>
    <scope>NUCLEOTIDE SEQUENCE [LARGE SCALE GENOMIC DNA]</scope>
    <source>
        <strain>O157:H7 / EDL933 / ATCC 700927 / EHEC</strain>
    </source>
</reference>
<reference key="2">
    <citation type="journal article" date="2001" name="DNA Res.">
        <title>Complete genome sequence of enterohemorrhagic Escherichia coli O157:H7 and genomic comparison with a laboratory strain K-12.</title>
        <authorList>
            <person name="Hayashi T."/>
            <person name="Makino K."/>
            <person name="Ohnishi M."/>
            <person name="Kurokawa K."/>
            <person name="Ishii K."/>
            <person name="Yokoyama K."/>
            <person name="Han C.-G."/>
            <person name="Ohtsubo E."/>
            <person name="Nakayama K."/>
            <person name="Murata T."/>
            <person name="Tanaka M."/>
            <person name="Tobe T."/>
            <person name="Iida T."/>
            <person name="Takami H."/>
            <person name="Honda T."/>
            <person name="Sasakawa C."/>
            <person name="Ogasawara N."/>
            <person name="Yasunaga T."/>
            <person name="Kuhara S."/>
            <person name="Shiba T."/>
            <person name="Hattori M."/>
            <person name="Shinagawa H."/>
        </authorList>
    </citation>
    <scope>NUCLEOTIDE SEQUENCE [LARGE SCALE GENOMIC DNA]</scope>
    <source>
        <strain>O157:H7 / Sakai / RIMD 0509952 / EHEC</strain>
    </source>
</reference>
<dbReference type="EC" id="2.5.1.54"/>
<dbReference type="EMBL" id="AE005174">
    <property type="protein sequence ID" value="AAG56691.1"/>
    <property type="molecule type" value="Genomic_DNA"/>
</dbReference>
<dbReference type="EMBL" id="BA000007">
    <property type="protein sequence ID" value="BAB35834.1"/>
    <property type="molecule type" value="Genomic_DNA"/>
</dbReference>
<dbReference type="PIR" id="C90930">
    <property type="entry name" value="C90930"/>
</dbReference>
<dbReference type="PIR" id="G85778">
    <property type="entry name" value="G85778"/>
</dbReference>
<dbReference type="RefSeq" id="NP_310438.1">
    <property type="nucleotide sequence ID" value="NC_002695.1"/>
</dbReference>
<dbReference type="RefSeq" id="WP_001082219.1">
    <property type="nucleotide sequence ID" value="NZ_VOAI01000007.1"/>
</dbReference>
<dbReference type="SMR" id="Q8X5W4"/>
<dbReference type="STRING" id="155864.Z2733"/>
<dbReference type="GeneID" id="912286"/>
<dbReference type="KEGG" id="ece:Z2733"/>
<dbReference type="KEGG" id="ecs:ECs_2411"/>
<dbReference type="PATRIC" id="fig|386585.9.peg.2525"/>
<dbReference type="eggNOG" id="COG0722">
    <property type="taxonomic scope" value="Bacteria"/>
</dbReference>
<dbReference type="HOGENOM" id="CLU_030903_0_1_6"/>
<dbReference type="OMA" id="PCLSWED"/>
<dbReference type="UniPathway" id="UPA00053">
    <property type="reaction ID" value="UER00084"/>
</dbReference>
<dbReference type="Proteomes" id="UP000000558">
    <property type="component" value="Chromosome"/>
</dbReference>
<dbReference type="Proteomes" id="UP000002519">
    <property type="component" value="Chromosome"/>
</dbReference>
<dbReference type="GO" id="GO:0005737">
    <property type="term" value="C:cytoplasm"/>
    <property type="evidence" value="ECO:0007669"/>
    <property type="project" value="TreeGrafter"/>
</dbReference>
<dbReference type="GO" id="GO:0003849">
    <property type="term" value="F:3-deoxy-7-phosphoheptulonate synthase activity"/>
    <property type="evidence" value="ECO:0007669"/>
    <property type="project" value="UniProtKB-EC"/>
</dbReference>
<dbReference type="GO" id="GO:0008652">
    <property type="term" value="P:amino acid biosynthetic process"/>
    <property type="evidence" value="ECO:0007669"/>
    <property type="project" value="UniProtKB-KW"/>
</dbReference>
<dbReference type="GO" id="GO:0009073">
    <property type="term" value="P:aromatic amino acid family biosynthetic process"/>
    <property type="evidence" value="ECO:0007669"/>
    <property type="project" value="UniProtKB-KW"/>
</dbReference>
<dbReference type="GO" id="GO:0009423">
    <property type="term" value="P:chorismate biosynthetic process"/>
    <property type="evidence" value="ECO:0007669"/>
    <property type="project" value="UniProtKB-UniPathway"/>
</dbReference>
<dbReference type="FunFam" id="3.20.20.70:FF:000005">
    <property type="entry name" value="Phospho-2-dehydro-3-deoxyheptonate aldolase"/>
    <property type="match status" value="1"/>
</dbReference>
<dbReference type="Gene3D" id="3.20.20.70">
    <property type="entry name" value="Aldolase class I"/>
    <property type="match status" value="1"/>
</dbReference>
<dbReference type="InterPro" id="IPR013785">
    <property type="entry name" value="Aldolase_TIM"/>
</dbReference>
<dbReference type="InterPro" id="IPR006218">
    <property type="entry name" value="DAHP1/KDSA"/>
</dbReference>
<dbReference type="InterPro" id="IPR006219">
    <property type="entry name" value="DAHP_synth_1"/>
</dbReference>
<dbReference type="NCBIfam" id="TIGR00034">
    <property type="entry name" value="aroFGH"/>
    <property type="match status" value="1"/>
</dbReference>
<dbReference type="NCBIfam" id="NF009395">
    <property type="entry name" value="PRK12755.1"/>
    <property type="match status" value="1"/>
</dbReference>
<dbReference type="NCBIfam" id="NF009396">
    <property type="entry name" value="PRK12756.1"/>
    <property type="match status" value="1"/>
</dbReference>
<dbReference type="PANTHER" id="PTHR21225">
    <property type="entry name" value="PHOSPHO-2-DEHYDRO-3-DEOXYHEPTONATE ALDOLASE DAHP SYNTHETASE"/>
    <property type="match status" value="1"/>
</dbReference>
<dbReference type="PANTHER" id="PTHR21225:SF6">
    <property type="entry name" value="PHOSPHO-2-DEHYDRO-3-DEOXYHEPTONATE ALDOLASE, TRP-SENSITIVE"/>
    <property type="match status" value="1"/>
</dbReference>
<dbReference type="Pfam" id="PF00793">
    <property type="entry name" value="DAHP_synth_1"/>
    <property type="match status" value="1"/>
</dbReference>
<dbReference type="PIRSF" id="PIRSF001361">
    <property type="entry name" value="DAHP_synthase"/>
    <property type="match status" value="1"/>
</dbReference>
<dbReference type="SUPFAM" id="SSF51569">
    <property type="entry name" value="Aldolase"/>
    <property type="match status" value="1"/>
</dbReference>
<keyword id="KW-0028">Amino-acid biosynthesis</keyword>
<keyword id="KW-0057">Aromatic amino acid biosynthesis</keyword>
<keyword id="KW-1185">Reference proteome</keyword>
<keyword id="KW-0808">Transferase</keyword>
<sequence>MNRTDELRTARIESLVTPAELALRYPVTPGVATHVTDSRRRIEKILNGEDKRLLVIIGPCSIHDLTAAMEYATRLQSLRNQYQSRLEIVMRTYFEKPRTVVGWKGLISDPDLNGSYRINHGLELARKLLLQVNELGVPTATEFLDMVTGQFIADLISWGAIGARTTESQIHREMASALSCPVGFKNGTDGNTRIAVDAIRAARASHMFLSPDKNGQMTIYQTSGNPYGHIIMRGGKKPNYHADDIAAACDTLHEFDLPEHLVVDFSHGNCQKQHRRQLEVCEDICQQIRNGSTAIAGIMAESFLREGTQKIVGGQPLTYGQSITDPCLGWEDTERLVEKLASAVDTRF</sequence>
<organism>
    <name type="scientific">Escherichia coli O157:H7</name>
    <dbReference type="NCBI Taxonomy" id="83334"/>
    <lineage>
        <taxon>Bacteria</taxon>
        <taxon>Pseudomonadati</taxon>
        <taxon>Pseudomonadota</taxon>
        <taxon>Gammaproteobacteria</taxon>
        <taxon>Enterobacterales</taxon>
        <taxon>Enterobacteriaceae</taxon>
        <taxon>Escherichia</taxon>
    </lineage>
</organism>
<protein>
    <recommendedName>
        <fullName>Phospho-2-dehydro-3-deoxyheptonate aldolase, Trp-sensitive</fullName>
        <ecNumber>2.5.1.54</ecNumber>
    </recommendedName>
    <alternativeName>
        <fullName>3-deoxy-D-arabino-heptulosonate 7-phosphate synthase</fullName>
    </alternativeName>
    <alternativeName>
        <fullName>DAHP synthase</fullName>
    </alternativeName>
    <alternativeName>
        <fullName>Phospho-2-keto-3-deoxyheptonate aldolase</fullName>
    </alternativeName>
</protein>